<name>RL23_PEDPA</name>
<evidence type="ECO:0000255" key="1">
    <source>
        <dbReference type="HAMAP-Rule" id="MF_01369"/>
    </source>
</evidence>
<evidence type="ECO:0000305" key="2"/>
<dbReference type="EMBL" id="CP000422">
    <property type="protein sequence ID" value="ABJ68454.1"/>
    <property type="molecule type" value="Genomic_DNA"/>
</dbReference>
<dbReference type="RefSeq" id="WP_011673656.1">
    <property type="nucleotide sequence ID" value="NC_008525.1"/>
</dbReference>
<dbReference type="SMR" id="Q03EB8"/>
<dbReference type="STRING" id="278197.PEPE_1416"/>
<dbReference type="GeneID" id="33061392"/>
<dbReference type="KEGG" id="ppe:PEPE_1416"/>
<dbReference type="eggNOG" id="COG0089">
    <property type="taxonomic scope" value="Bacteria"/>
</dbReference>
<dbReference type="HOGENOM" id="CLU_037562_3_2_9"/>
<dbReference type="OrthoDB" id="9793353at2"/>
<dbReference type="Proteomes" id="UP000000773">
    <property type="component" value="Chromosome"/>
</dbReference>
<dbReference type="GO" id="GO:1990904">
    <property type="term" value="C:ribonucleoprotein complex"/>
    <property type="evidence" value="ECO:0007669"/>
    <property type="project" value="UniProtKB-KW"/>
</dbReference>
<dbReference type="GO" id="GO:0005840">
    <property type="term" value="C:ribosome"/>
    <property type="evidence" value="ECO:0007669"/>
    <property type="project" value="UniProtKB-KW"/>
</dbReference>
<dbReference type="GO" id="GO:0019843">
    <property type="term" value="F:rRNA binding"/>
    <property type="evidence" value="ECO:0007669"/>
    <property type="project" value="UniProtKB-UniRule"/>
</dbReference>
<dbReference type="GO" id="GO:0003735">
    <property type="term" value="F:structural constituent of ribosome"/>
    <property type="evidence" value="ECO:0007669"/>
    <property type="project" value="InterPro"/>
</dbReference>
<dbReference type="GO" id="GO:0006412">
    <property type="term" value="P:translation"/>
    <property type="evidence" value="ECO:0007669"/>
    <property type="project" value="UniProtKB-UniRule"/>
</dbReference>
<dbReference type="FunFam" id="3.30.70.330:FF:000001">
    <property type="entry name" value="50S ribosomal protein L23"/>
    <property type="match status" value="1"/>
</dbReference>
<dbReference type="Gene3D" id="3.30.70.330">
    <property type="match status" value="1"/>
</dbReference>
<dbReference type="HAMAP" id="MF_01369_B">
    <property type="entry name" value="Ribosomal_uL23_B"/>
    <property type="match status" value="1"/>
</dbReference>
<dbReference type="InterPro" id="IPR012677">
    <property type="entry name" value="Nucleotide-bd_a/b_plait_sf"/>
</dbReference>
<dbReference type="InterPro" id="IPR013025">
    <property type="entry name" value="Ribosomal_uL23-like"/>
</dbReference>
<dbReference type="InterPro" id="IPR012678">
    <property type="entry name" value="Ribosomal_uL23/eL15/eS24_sf"/>
</dbReference>
<dbReference type="NCBIfam" id="NF004363">
    <property type="entry name" value="PRK05738.2-4"/>
    <property type="match status" value="1"/>
</dbReference>
<dbReference type="PANTHER" id="PTHR11620">
    <property type="entry name" value="60S RIBOSOMAL PROTEIN L23A"/>
    <property type="match status" value="1"/>
</dbReference>
<dbReference type="Pfam" id="PF00276">
    <property type="entry name" value="Ribosomal_L23"/>
    <property type="match status" value="1"/>
</dbReference>
<dbReference type="SUPFAM" id="SSF54189">
    <property type="entry name" value="Ribosomal proteins S24e, L23 and L15e"/>
    <property type="match status" value="1"/>
</dbReference>
<comment type="function">
    <text evidence="1">One of the early assembly proteins it binds 23S rRNA. One of the proteins that surrounds the polypeptide exit tunnel on the outside of the ribosome. Forms the main docking site for trigger factor binding to the ribosome.</text>
</comment>
<comment type="subunit">
    <text evidence="1">Part of the 50S ribosomal subunit. Contacts protein L29, and trigger factor when it is bound to the ribosome.</text>
</comment>
<comment type="similarity">
    <text evidence="1">Belongs to the universal ribosomal protein uL23 family.</text>
</comment>
<sequence>MESRDIILRPVVTEASMALIDNKRYTFDVDPRATKTQVKKAIEEIFEVTVIKINIMNVKGKLKRQGRYAGYTKKRRKAIVQLSADSKEIQLFGEE</sequence>
<reference key="1">
    <citation type="journal article" date="2006" name="Proc. Natl. Acad. Sci. U.S.A.">
        <title>Comparative genomics of the lactic acid bacteria.</title>
        <authorList>
            <person name="Makarova K.S."/>
            <person name="Slesarev A."/>
            <person name="Wolf Y.I."/>
            <person name="Sorokin A."/>
            <person name="Mirkin B."/>
            <person name="Koonin E.V."/>
            <person name="Pavlov A."/>
            <person name="Pavlova N."/>
            <person name="Karamychev V."/>
            <person name="Polouchine N."/>
            <person name="Shakhova V."/>
            <person name="Grigoriev I."/>
            <person name="Lou Y."/>
            <person name="Rohksar D."/>
            <person name="Lucas S."/>
            <person name="Huang K."/>
            <person name="Goodstein D.M."/>
            <person name="Hawkins T."/>
            <person name="Plengvidhya V."/>
            <person name="Welker D."/>
            <person name="Hughes J."/>
            <person name="Goh Y."/>
            <person name="Benson A."/>
            <person name="Baldwin K."/>
            <person name="Lee J.-H."/>
            <person name="Diaz-Muniz I."/>
            <person name="Dosti B."/>
            <person name="Smeianov V."/>
            <person name="Wechter W."/>
            <person name="Barabote R."/>
            <person name="Lorca G."/>
            <person name="Altermann E."/>
            <person name="Barrangou R."/>
            <person name="Ganesan B."/>
            <person name="Xie Y."/>
            <person name="Rawsthorne H."/>
            <person name="Tamir D."/>
            <person name="Parker C."/>
            <person name="Breidt F."/>
            <person name="Broadbent J.R."/>
            <person name="Hutkins R."/>
            <person name="O'Sullivan D."/>
            <person name="Steele J."/>
            <person name="Unlu G."/>
            <person name="Saier M.H. Jr."/>
            <person name="Klaenhammer T."/>
            <person name="Richardson P."/>
            <person name="Kozyavkin S."/>
            <person name="Weimer B.C."/>
            <person name="Mills D.A."/>
        </authorList>
    </citation>
    <scope>NUCLEOTIDE SEQUENCE [LARGE SCALE GENOMIC DNA]</scope>
    <source>
        <strain>ATCC 25745 / CCUG 21536 / LMG 10740 / 183-1w</strain>
    </source>
</reference>
<accession>Q03EB8</accession>
<organism>
    <name type="scientific">Pediococcus pentosaceus (strain ATCC 25745 / CCUG 21536 / LMG 10740 / 183-1w)</name>
    <dbReference type="NCBI Taxonomy" id="278197"/>
    <lineage>
        <taxon>Bacteria</taxon>
        <taxon>Bacillati</taxon>
        <taxon>Bacillota</taxon>
        <taxon>Bacilli</taxon>
        <taxon>Lactobacillales</taxon>
        <taxon>Lactobacillaceae</taxon>
        <taxon>Pediococcus</taxon>
    </lineage>
</organism>
<keyword id="KW-0687">Ribonucleoprotein</keyword>
<keyword id="KW-0689">Ribosomal protein</keyword>
<keyword id="KW-0694">RNA-binding</keyword>
<keyword id="KW-0699">rRNA-binding</keyword>
<proteinExistence type="inferred from homology"/>
<feature type="chain" id="PRO_1000068128" description="Large ribosomal subunit protein uL23">
    <location>
        <begin position="1"/>
        <end position="95"/>
    </location>
</feature>
<protein>
    <recommendedName>
        <fullName evidence="1">Large ribosomal subunit protein uL23</fullName>
    </recommendedName>
    <alternativeName>
        <fullName evidence="2">50S ribosomal protein L23</fullName>
    </alternativeName>
</protein>
<gene>
    <name evidence="1" type="primary">rplW</name>
    <name type="ordered locus">PEPE_1416</name>
</gene>